<dbReference type="EC" id="7.4.2.11" evidence="1"/>
<dbReference type="EMBL" id="AE003852">
    <property type="protein sequence ID" value="AAF94069.1"/>
    <property type="molecule type" value="Genomic_DNA"/>
</dbReference>
<dbReference type="PIR" id="C82266">
    <property type="entry name" value="C82266"/>
</dbReference>
<dbReference type="RefSeq" id="NP_230554.1">
    <property type="nucleotide sequence ID" value="NC_002505.1"/>
</dbReference>
<dbReference type="RefSeq" id="WP_000569878.1">
    <property type="nucleotide sequence ID" value="NZ_LT906614.1"/>
</dbReference>
<dbReference type="SMR" id="Q9KTJ5"/>
<dbReference type="STRING" id="243277.VC_0907"/>
<dbReference type="DNASU" id="2614198"/>
<dbReference type="EnsemblBacteria" id="AAF94069">
    <property type="protein sequence ID" value="AAF94069"/>
    <property type="gene ID" value="VC_0907"/>
</dbReference>
<dbReference type="GeneID" id="89514983"/>
<dbReference type="KEGG" id="vch:VC_0907"/>
<dbReference type="PATRIC" id="fig|243277.26.peg.864"/>
<dbReference type="eggNOG" id="COG1135">
    <property type="taxonomic scope" value="Bacteria"/>
</dbReference>
<dbReference type="HOGENOM" id="CLU_000604_1_3_6"/>
<dbReference type="Proteomes" id="UP000000584">
    <property type="component" value="Chromosome 1"/>
</dbReference>
<dbReference type="GO" id="GO:0009276">
    <property type="term" value="C:Gram-negative-bacterium-type cell wall"/>
    <property type="evidence" value="ECO:0007669"/>
    <property type="project" value="InterPro"/>
</dbReference>
<dbReference type="GO" id="GO:0005886">
    <property type="term" value="C:plasma membrane"/>
    <property type="evidence" value="ECO:0007669"/>
    <property type="project" value="UniProtKB-SubCell"/>
</dbReference>
<dbReference type="GO" id="GO:0033232">
    <property type="term" value="F:ABC-type D-methionine transporter activity"/>
    <property type="evidence" value="ECO:0007669"/>
    <property type="project" value="UniProtKB-EC"/>
</dbReference>
<dbReference type="GO" id="GO:0005524">
    <property type="term" value="F:ATP binding"/>
    <property type="evidence" value="ECO:0007669"/>
    <property type="project" value="UniProtKB-KW"/>
</dbReference>
<dbReference type="GO" id="GO:0016887">
    <property type="term" value="F:ATP hydrolysis activity"/>
    <property type="evidence" value="ECO:0007669"/>
    <property type="project" value="InterPro"/>
</dbReference>
<dbReference type="CDD" id="cd03258">
    <property type="entry name" value="ABC_MetN_methionine_transporter"/>
    <property type="match status" value="1"/>
</dbReference>
<dbReference type="FunFam" id="3.40.50.300:FF:000233">
    <property type="entry name" value="Methionine import ATP-binding protein MetN"/>
    <property type="match status" value="1"/>
</dbReference>
<dbReference type="Gene3D" id="3.30.70.260">
    <property type="match status" value="1"/>
</dbReference>
<dbReference type="Gene3D" id="3.40.50.300">
    <property type="entry name" value="P-loop containing nucleotide triphosphate hydrolases"/>
    <property type="match status" value="1"/>
</dbReference>
<dbReference type="InterPro" id="IPR003593">
    <property type="entry name" value="AAA+_ATPase"/>
</dbReference>
<dbReference type="InterPro" id="IPR012692">
    <property type="entry name" value="ABC_MetN_proteobac"/>
</dbReference>
<dbReference type="InterPro" id="IPR003439">
    <property type="entry name" value="ABC_transporter-like_ATP-bd"/>
</dbReference>
<dbReference type="InterPro" id="IPR017871">
    <property type="entry name" value="ABC_transporter-like_CS"/>
</dbReference>
<dbReference type="InterPro" id="IPR045865">
    <property type="entry name" value="ACT-like_dom_sf"/>
</dbReference>
<dbReference type="InterPro" id="IPR041701">
    <property type="entry name" value="MetN_ABC"/>
</dbReference>
<dbReference type="InterPro" id="IPR050086">
    <property type="entry name" value="MetN_ABC_transporter-like"/>
</dbReference>
<dbReference type="InterPro" id="IPR018449">
    <property type="entry name" value="NIL_domain"/>
</dbReference>
<dbReference type="InterPro" id="IPR027417">
    <property type="entry name" value="P-loop_NTPase"/>
</dbReference>
<dbReference type="NCBIfam" id="TIGR02314">
    <property type="entry name" value="ABC_MetN"/>
    <property type="match status" value="1"/>
</dbReference>
<dbReference type="PANTHER" id="PTHR43166">
    <property type="entry name" value="AMINO ACID IMPORT ATP-BINDING PROTEIN"/>
    <property type="match status" value="1"/>
</dbReference>
<dbReference type="PANTHER" id="PTHR43166:SF30">
    <property type="entry name" value="METHIONINE IMPORT ATP-BINDING PROTEIN METN"/>
    <property type="match status" value="1"/>
</dbReference>
<dbReference type="Pfam" id="PF00005">
    <property type="entry name" value="ABC_tran"/>
    <property type="match status" value="1"/>
</dbReference>
<dbReference type="Pfam" id="PF09383">
    <property type="entry name" value="NIL"/>
    <property type="match status" value="1"/>
</dbReference>
<dbReference type="SMART" id="SM00382">
    <property type="entry name" value="AAA"/>
    <property type="match status" value="1"/>
</dbReference>
<dbReference type="SMART" id="SM00930">
    <property type="entry name" value="NIL"/>
    <property type="match status" value="1"/>
</dbReference>
<dbReference type="SUPFAM" id="SSF55021">
    <property type="entry name" value="ACT-like"/>
    <property type="match status" value="1"/>
</dbReference>
<dbReference type="SUPFAM" id="SSF52540">
    <property type="entry name" value="P-loop containing nucleoside triphosphate hydrolases"/>
    <property type="match status" value="1"/>
</dbReference>
<dbReference type="PROSITE" id="PS00211">
    <property type="entry name" value="ABC_TRANSPORTER_1"/>
    <property type="match status" value="1"/>
</dbReference>
<dbReference type="PROSITE" id="PS50893">
    <property type="entry name" value="ABC_TRANSPORTER_2"/>
    <property type="match status" value="1"/>
</dbReference>
<dbReference type="PROSITE" id="PS51264">
    <property type="entry name" value="METN"/>
    <property type="match status" value="1"/>
</dbReference>
<gene>
    <name evidence="1" type="primary">metN</name>
    <name type="ordered locus">VC_0907</name>
</gene>
<accession>Q9KTJ5</accession>
<feature type="chain" id="PRO_0000092511" description="Methionine import ATP-binding protein MetN">
    <location>
        <begin position="1"/>
        <end position="344"/>
    </location>
</feature>
<feature type="domain" description="ABC transporter" evidence="1">
    <location>
        <begin position="2"/>
        <end position="241"/>
    </location>
</feature>
<feature type="binding site" evidence="1">
    <location>
        <begin position="38"/>
        <end position="45"/>
    </location>
    <ligand>
        <name>ATP</name>
        <dbReference type="ChEBI" id="CHEBI:30616"/>
    </ligand>
</feature>
<name>METN_VIBCH</name>
<protein>
    <recommendedName>
        <fullName evidence="1">Methionine import ATP-binding protein MetN</fullName>
        <ecNumber evidence="1">7.4.2.11</ecNumber>
    </recommendedName>
</protein>
<reference key="1">
    <citation type="journal article" date="2000" name="Nature">
        <title>DNA sequence of both chromosomes of the cholera pathogen Vibrio cholerae.</title>
        <authorList>
            <person name="Heidelberg J.F."/>
            <person name="Eisen J.A."/>
            <person name="Nelson W.C."/>
            <person name="Clayton R.A."/>
            <person name="Gwinn M.L."/>
            <person name="Dodson R.J."/>
            <person name="Haft D.H."/>
            <person name="Hickey E.K."/>
            <person name="Peterson J.D."/>
            <person name="Umayam L.A."/>
            <person name="Gill S.R."/>
            <person name="Nelson K.E."/>
            <person name="Read T.D."/>
            <person name="Tettelin H."/>
            <person name="Richardson D.L."/>
            <person name="Ermolaeva M.D."/>
            <person name="Vamathevan J.J."/>
            <person name="Bass S."/>
            <person name="Qin H."/>
            <person name="Dragoi I."/>
            <person name="Sellers P."/>
            <person name="McDonald L.A."/>
            <person name="Utterback T.R."/>
            <person name="Fleischmann R.D."/>
            <person name="Nierman W.C."/>
            <person name="White O."/>
            <person name="Salzberg S.L."/>
            <person name="Smith H.O."/>
            <person name="Colwell R.R."/>
            <person name="Mekalanos J.J."/>
            <person name="Venter J.C."/>
            <person name="Fraser C.M."/>
        </authorList>
    </citation>
    <scope>NUCLEOTIDE SEQUENCE [LARGE SCALE GENOMIC DNA]</scope>
    <source>
        <strain>ATCC 39315 / El Tor Inaba N16961</strain>
    </source>
</reference>
<organism>
    <name type="scientific">Vibrio cholerae serotype O1 (strain ATCC 39315 / El Tor Inaba N16961)</name>
    <dbReference type="NCBI Taxonomy" id="243277"/>
    <lineage>
        <taxon>Bacteria</taxon>
        <taxon>Pseudomonadati</taxon>
        <taxon>Pseudomonadota</taxon>
        <taxon>Gammaproteobacteria</taxon>
        <taxon>Vibrionales</taxon>
        <taxon>Vibrionaceae</taxon>
        <taxon>Vibrio</taxon>
    </lineage>
</organism>
<proteinExistence type="inferred from homology"/>
<comment type="function">
    <text evidence="1">Part of the ABC transporter complex MetNIQ involved in methionine import. Responsible for energy coupling to the transport system.</text>
</comment>
<comment type="catalytic activity">
    <reaction evidence="1">
        <text>L-methionine(out) + ATP + H2O = L-methionine(in) + ADP + phosphate + H(+)</text>
        <dbReference type="Rhea" id="RHEA:29779"/>
        <dbReference type="ChEBI" id="CHEBI:15377"/>
        <dbReference type="ChEBI" id="CHEBI:15378"/>
        <dbReference type="ChEBI" id="CHEBI:30616"/>
        <dbReference type="ChEBI" id="CHEBI:43474"/>
        <dbReference type="ChEBI" id="CHEBI:57844"/>
        <dbReference type="ChEBI" id="CHEBI:456216"/>
        <dbReference type="EC" id="7.4.2.11"/>
    </reaction>
</comment>
<comment type="catalytic activity">
    <reaction evidence="1">
        <text>D-methionine(out) + ATP + H2O = D-methionine(in) + ADP + phosphate + H(+)</text>
        <dbReference type="Rhea" id="RHEA:29767"/>
        <dbReference type="ChEBI" id="CHEBI:15377"/>
        <dbReference type="ChEBI" id="CHEBI:15378"/>
        <dbReference type="ChEBI" id="CHEBI:30616"/>
        <dbReference type="ChEBI" id="CHEBI:43474"/>
        <dbReference type="ChEBI" id="CHEBI:57932"/>
        <dbReference type="ChEBI" id="CHEBI:456216"/>
        <dbReference type="EC" id="7.4.2.11"/>
    </reaction>
</comment>
<comment type="subunit">
    <text evidence="1">The complex is composed of two ATP-binding proteins (MetN), two transmembrane proteins (MetI) and a solute-binding protein (MetQ).</text>
</comment>
<comment type="subcellular location">
    <subcellularLocation>
        <location evidence="1">Cell inner membrane</location>
        <topology evidence="1">Peripheral membrane protein</topology>
    </subcellularLocation>
</comment>
<comment type="similarity">
    <text evidence="1">Belongs to the ABC transporter superfamily. Methionine importer (TC 3.A.1.24) family.</text>
</comment>
<keyword id="KW-0029">Amino-acid transport</keyword>
<keyword id="KW-0067">ATP-binding</keyword>
<keyword id="KW-0997">Cell inner membrane</keyword>
<keyword id="KW-1003">Cell membrane</keyword>
<keyword id="KW-0472">Membrane</keyword>
<keyword id="KW-0547">Nucleotide-binding</keyword>
<keyword id="KW-1185">Reference proteome</keyword>
<keyword id="KW-1278">Translocase</keyword>
<keyword id="KW-0813">Transport</keyword>
<sequence>MIEIKSVNKVFYQGDKQIHALKDINLFIPQGTIFGVIGSSGAGKSTLIRCVNMLEKPTSGQVIVDGVDLTTLSNPQLCAARRNIGMIFQHFNLLSSRTVFENVALPLELAGQSQQHIETKVTELLALVGLSEKRESYPANLSGGQKQRVAIARALASDPKVLLCDEATSALDPATTQSILELLKEINRQLNLTILLITHEMDVVKSICHEVAIIGGGELVEKGTVGDIFAHPKTELAHQFIRSTLDLSIPEDYQVRLQPTRVAGSYPLVRLEFTGATVDAPLMTQIARKYNIDVSILSSDLDYAGGVKFGMMVAEIFGNADDDEAAIRYLRENNVKVEVLGYVL</sequence>
<evidence type="ECO:0000255" key="1">
    <source>
        <dbReference type="HAMAP-Rule" id="MF_01719"/>
    </source>
</evidence>